<sequence length="374" mass="41849">MMTDNSKTRVVVGMSGGVDSSVTALLLKEQGYDVIGVFMKNWDDTDEFGVCTATEDYKDVAAVADQIGIPYYSVNFEKEYWDRVFEYFLAEYRSGRTPNPDVMCNKEIKFKAFLDYAMTLGADYVATGHYAQIKRDENGVVHMLRGLDKGKDQTYFLSQLSQEQLQKTMFPLGHLQKSEVRAIAEQAGLATAKKKDSTGICFIGEKNFKTFLSHYLPAQKGRMMTVDGRDMGEHAGLMYYTIGQRGGLGIGGQQGGDNKPWFVVGKDLSQNILYVGQGFYHESLMSTSLDASVIQFTREVPEEFTLECTAKFRYRQPDSKVTVHVKKDKAKVVFAEPQRAITPGQAVVFYDGHECLGGGIIDMAYKDGEPCQYI</sequence>
<dbReference type="EC" id="2.8.1.13" evidence="1"/>
<dbReference type="EMBL" id="CP001129">
    <property type="protein sequence ID" value="ACG63250.1"/>
    <property type="molecule type" value="Genomic_DNA"/>
</dbReference>
<dbReference type="SMR" id="B4U0P1"/>
<dbReference type="KEGG" id="sez:Sez_1931"/>
<dbReference type="HOGENOM" id="CLU_035188_1_0_9"/>
<dbReference type="Proteomes" id="UP000001873">
    <property type="component" value="Chromosome"/>
</dbReference>
<dbReference type="GO" id="GO:0005737">
    <property type="term" value="C:cytoplasm"/>
    <property type="evidence" value="ECO:0007669"/>
    <property type="project" value="UniProtKB-SubCell"/>
</dbReference>
<dbReference type="GO" id="GO:0005524">
    <property type="term" value="F:ATP binding"/>
    <property type="evidence" value="ECO:0007669"/>
    <property type="project" value="UniProtKB-KW"/>
</dbReference>
<dbReference type="GO" id="GO:0000049">
    <property type="term" value="F:tRNA binding"/>
    <property type="evidence" value="ECO:0007669"/>
    <property type="project" value="UniProtKB-KW"/>
</dbReference>
<dbReference type="GO" id="GO:0103016">
    <property type="term" value="F:tRNA-uridine 2-sulfurtransferase activity"/>
    <property type="evidence" value="ECO:0007669"/>
    <property type="project" value="UniProtKB-EC"/>
</dbReference>
<dbReference type="GO" id="GO:0002143">
    <property type="term" value="P:tRNA wobble position uridine thiolation"/>
    <property type="evidence" value="ECO:0007669"/>
    <property type="project" value="TreeGrafter"/>
</dbReference>
<dbReference type="CDD" id="cd01998">
    <property type="entry name" value="MnmA_TRMU-like"/>
    <property type="match status" value="1"/>
</dbReference>
<dbReference type="FunFam" id="2.30.30.280:FF:000001">
    <property type="entry name" value="tRNA-specific 2-thiouridylase MnmA"/>
    <property type="match status" value="1"/>
</dbReference>
<dbReference type="FunFam" id="2.40.30.10:FF:000023">
    <property type="entry name" value="tRNA-specific 2-thiouridylase MnmA"/>
    <property type="match status" value="1"/>
</dbReference>
<dbReference type="FunFam" id="3.40.50.620:FF:000004">
    <property type="entry name" value="tRNA-specific 2-thiouridylase MnmA"/>
    <property type="match status" value="1"/>
</dbReference>
<dbReference type="Gene3D" id="2.30.30.280">
    <property type="entry name" value="Adenine nucleotide alpha hydrolases-like domains"/>
    <property type="match status" value="1"/>
</dbReference>
<dbReference type="Gene3D" id="3.40.50.620">
    <property type="entry name" value="HUPs"/>
    <property type="match status" value="1"/>
</dbReference>
<dbReference type="Gene3D" id="2.40.30.10">
    <property type="entry name" value="Translation factors"/>
    <property type="match status" value="1"/>
</dbReference>
<dbReference type="HAMAP" id="MF_00144">
    <property type="entry name" value="tRNA_thiouridyl_MnmA"/>
    <property type="match status" value="1"/>
</dbReference>
<dbReference type="InterPro" id="IPR004506">
    <property type="entry name" value="MnmA-like"/>
</dbReference>
<dbReference type="InterPro" id="IPR046885">
    <property type="entry name" value="MnmA-like_C"/>
</dbReference>
<dbReference type="InterPro" id="IPR046884">
    <property type="entry name" value="MnmA-like_central"/>
</dbReference>
<dbReference type="InterPro" id="IPR023382">
    <property type="entry name" value="MnmA-like_central_sf"/>
</dbReference>
<dbReference type="InterPro" id="IPR014729">
    <property type="entry name" value="Rossmann-like_a/b/a_fold"/>
</dbReference>
<dbReference type="NCBIfam" id="NF001138">
    <property type="entry name" value="PRK00143.1"/>
    <property type="match status" value="1"/>
</dbReference>
<dbReference type="NCBIfam" id="TIGR00420">
    <property type="entry name" value="trmU"/>
    <property type="match status" value="1"/>
</dbReference>
<dbReference type="PANTHER" id="PTHR11933:SF5">
    <property type="entry name" value="MITOCHONDRIAL TRNA-SPECIFIC 2-THIOURIDYLASE 1"/>
    <property type="match status" value="1"/>
</dbReference>
<dbReference type="PANTHER" id="PTHR11933">
    <property type="entry name" value="TRNA 5-METHYLAMINOMETHYL-2-THIOURIDYLATE -METHYLTRANSFERASE"/>
    <property type="match status" value="1"/>
</dbReference>
<dbReference type="Pfam" id="PF03054">
    <property type="entry name" value="tRNA_Me_trans"/>
    <property type="match status" value="1"/>
</dbReference>
<dbReference type="Pfam" id="PF20258">
    <property type="entry name" value="tRNA_Me_trans_C"/>
    <property type="match status" value="1"/>
</dbReference>
<dbReference type="Pfam" id="PF20259">
    <property type="entry name" value="tRNA_Me_trans_M"/>
    <property type="match status" value="1"/>
</dbReference>
<dbReference type="SUPFAM" id="SSF52402">
    <property type="entry name" value="Adenine nucleotide alpha hydrolases-like"/>
    <property type="match status" value="1"/>
</dbReference>
<keyword id="KW-0067">ATP-binding</keyword>
<keyword id="KW-0963">Cytoplasm</keyword>
<keyword id="KW-1015">Disulfide bond</keyword>
<keyword id="KW-0547">Nucleotide-binding</keyword>
<keyword id="KW-0694">RNA-binding</keyword>
<keyword id="KW-0808">Transferase</keyword>
<keyword id="KW-0819">tRNA processing</keyword>
<keyword id="KW-0820">tRNA-binding</keyword>
<proteinExistence type="inferred from homology"/>
<gene>
    <name evidence="1" type="primary">mnmA</name>
    <name type="ordered locus">Sez_1931</name>
</gene>
<name>MNMA_STREM</name>
<reference key="1">
    <citation type="journal article" date="2008" name="PLoS ONE">
        <title>Genome sequence of a lancefield group C Streptococcus zooepidemicus strain causing epidemic nephritis: new information about an old disease.</title>
        <authorList>
            <person name="Beres S.B."/>
            <person name="Sesso R."/>
            <person name="Pinto S.W.L."/>
            <person name="Hoe N.P."/>
            <person name="Porcella S.F."/>
            <person name="Deleo F.R."/>
            <person name="Musser J.M."/>
        </authorList>
    </citation>
    <scope>NUCLEOTIDE SEQUENCE [LARGE SCALE GENOMIC DNA]</scope>
    <source>
        <strain>MGCS10565</strain>
    </source>
</reference>
<evidence type="ECO:0000255" key="1">
    <source>
        <dbReference type="HAMAP-Rule" id="MF_00144"/>
    </source>
</evidence>
<comment type="function">
    <text evidence="1">Catalyzes the 2-thiolation of uridine at the wobble position (U34) of tRNA, leading to the formation of s(2)U34.</text>
</comment>
<comment type="catalytic activity">
    <reaction evidence="1">
        <text>S-sulfanyl-L-cysteinyl-[protein] + uridine(34) in tRNA + AH2 + ATP = 2-thiouridine(34) in tRNA + L-cysteinyl-[protein] + A + AMP + diphosphate + H(+)</text>
        <dbReference type="Rhea" id="RHEA:47032"/>
        <dbReference type="Rhea" id="RHEA-COMP:10131"/>
        <dbReference type="Rhea" id="RHEA-COMP:11726"/>
        <dbReference type="Rhea" id="RHEA-COMP:11727"/>
        <dbReference type="Rhea" id="RHEA-COMP:11728"/>
        <dbReference type="ChEBI" id="CHEBI:13193"/>
        <dbReference type="ChEBI" id="CHEBI:15378"/>
        <dbReference type="ChEBI" id="CHEBI:17499"/>
        <dbReference type="ChEBI" id="CHEBI:29950"/>
        <dbReference type="ChEBI" id="CHEBI:30616"/>
        <dbReference type="ChEBI" id="CHEBI:33019"/>
        <dbReference type="ChEBI" id="CHEBI:61963"/>
        <dbReference type="ChEBI" id="CHEBI:65315"/>
        <dbReference type="ChEBI" id="CHEBI:87170"/>
        <dbReference type="ChEBI" id="CHEBI:456215"/>
        <dbReference type="EC" id="2.8.1.13"/>
    </reaction>
</comment>
<comment type="subcellular location">
    <subcellularLocation>
        <location evidence="1">Cytoplasm</location>
    </subcellularLocation>
</comment>
<comment type="similarity">
    <text evidence="1">Belongs to the MnmA/TRMU family.</text>
</comment>
<organism>
    <name type="scientific">Streptococcus equi subsp. zooepidemicus (strain MGCS10565)</name>
    <dbReference type="NCBI Taxonomy" id="552526"/>
    <lineage>
        <taxon>Bacteria</taxon>
        <taxon>Bacillati</taxon>
        <taxon>Bacillota</taxon>
        <taxon>Bacilli</taxon>
        <taxon>Lactobacillales</taxon>
        <taxon>Streptococcaceae</taxon>
        <taxon>Streptococcus</taxon>
    </lineage>
</organism>
<feature type="chain" id="PRO_1000096304" description="tRNA-specific 2-thiouridylase MnmA">
    <location>
        <begin position="1"/>
        <end position="374"/>
    </location>
</feature>
<feature type="region of interest" description="Interaction with target base in tRNA" evidence="1">
    <location>
        <begin position="99"/>
        <end position="101"/>
    </location>
</feature>
<feature type="region of interest" description="Interaction with tRNA" evidence="1">
    <location>
        <begin position="151"/>
        <end position="153"/>
    </location>
</feature>
<feature type="region of interest" description="Interaction with tRNA" evidence="1">
    <location>
        <begin position="313"/>
        <end position="314"/>
    </location>
</feature>
<feature type="active site" description="Nucleophile" evidence="1">
    <location>
        <position position="104"/>
    </location>
</feature>
<feature type="active site" description="Cysteine persulfide intermediate" evidence="1">
    <location>
        <position position="201"/>
    </location>
</feature>
<feature type="binding site" evidence="1">
    <location>
        <begin position="13"/>
        <end position="20"/>
    </location>
    <ligand>
        <name>ATP</name>
        <dbReference type="ChEBI" id="CHEBI:30616"/>
    </ligand>
</feature>
<feature type="binding site" evidence="1">
    <location>
        <position position="39"/>
    </location>
    <ligand>
        <name>ATP</name>
        <dbReference type="ChEBI" id="CHEBI:30616"/>
    </ligand>
</feature>
<feature type="binding site" evidence="1">
    <location>
        <position position="128"/>
    </location>
    <ligand>
        <name>ATP</name>
        <dbReference type="ChEBI" id="CHEBI:30616"/>
    </ligand>
</feature>
<feature type="site" description="Interaction with tRNA" evidence="1">
    <location>
        <position position="129"/>
    </location>
</feature>
<feature type="site" description="Interaction with tRNA" evidence="1">
    <location>
        <position position="345"/>
    </location>
</feature>
<feature type="disulfide bond" description="Alternate" evidence="1">
    <location>
        <begin position="104"/>
        <end position="201"/>
    </location>
</feature>
<protein>
    <recommendedName>
        <fullName evidence="1">tRNA-specific 2-thiouridylase MnmA</fullName>
        <ecNumber evidence="1">2.8.1.13</ecNumber>
    </recommendedName>
</protein>
<accession>B4U0P1</accession>